<feature type="chain" id="PRO_0000069557" description="Probable G-protein coupled receptor 33">
    <location>
        <begin position="1"/>
        <end position="339"/>
    </location>
</feature>
<feature type="topological domain" description="Extracellular" evidence="1">
    <location>
        <begin position="1"/>
        <end position="30"/>
    </location>
</feature>
<feature type="transmembrane region" description="Helical; Name=1" evidence="1">
    <location>
        <begin position="31"/>
        <end position="53"/>
    </location>
</feature>
<feature type="topological domain" description="Cytoplasmic" evidence="1">
    <location>
        <begin position="54"/>
        <end position="64"/>
    </location>
</feature>
<feature type="transmembrane region" description="Helical; Name=2" evidence="1">
    <location>
        <begin position="65"/>
        <end position="86"/>
    </location>
</feature>
<feature type="topological domain" description="Extracellular" evidence="1">
    <location>
        <begin position="87"/>
        <end position="103"/>
    </location>
</feature>
<feature type="transmembrane region" description="Helical; Name=3" evidence="1">
    <location>
        <begin position="104"/>
        <end position="124"/>
    </location>
</feature>
<feature type="topological domain" description="Cytoplasmic" evidence="1">
    <location>
        <begin position="125"/>
        <end position="143"/>
    </location>
</feature>
<feature type="transmembrane region" description="Helical; Name=4" evidence="1">
    <location>
        <begin position="144"/>
        <end position="165"/>
    </location>
</feature>
<feature type="topological domain" description="Extracellular" evidence="1">
    <location>
        <begin position="166"/>
        <end position="209"/>
    </location>
</feature>
<feature type="transmembrane region" description="Helical; Name=5" evidence="1">
    <location>
        <begin position="210"/>
        <end position="230"/>
    </location>
</feature>
<feature type="topological domain" description="Cytoplasmic" evidence="1">
    <location>
        <begin position="231"/>
        <end position="246"/>
    </location>
</feature>
<feature type="transmembrane region" description="Helical; Name=6" evidence="1">
    <location>
        <begin position="247"/>
        <end position="268"/>
    </location>
</feature>
<feature type="topological domain" description="Extracellular" evidence="1">
    <location>
        <begin position="269"/>
        <end position="283"/>
    </location>
</feature>
<feature type="transmembrane region" description="Helical; Name=7" evidence="1">
    <location>
        <begin position="284"/>
        <end position="303"/>
    </location>
</feature>
<feature type="topological domain" description="Cytoplasmic" evidence="1">
    <location>
        <begin position="304"/>
        <end position="339"/>
    </location>
</feature>
<feature type="glycosylation site" description="N-linked (GlcNAc...) asparagine" evidence="1">
    <location>
        <position position="5"/>
    </location>
</feature>
<feature type="glycosylation site" description="N-linked (GlcNAc...) asparagine" evidence="1">
    <location>
        <position position="19"/>
    </location>
</feature>
<feature type="disulfide bond" evidence="2">
    <location>
        <begin position="101"/>
        <end position="179"/>
    </location>
</feature>
<gene>
    <name type="primary">Gpr33</name>
</gene>
<name>GPR33_RATRT</name>
<keyword id="KW-1003">Cell membrane</keyword>
<keyword id="KW-1015">Disulfide bond</keyword>
<keyword id="KW-0297">G-protein coupled receptor</keyword>
<keyword id="KW-0325">Glycoprotein</keyword>
<keyword id="KW-0472">Membrane</keyword>
<keyword id="KW-0675">Receptor</keyword>
<keyword id="KW-0807">Transducer</keyword>
<keyword id="KW-0812">Transmembrane</keyword>
<keyword id="KW-1133">Transmembrane helix</keyword>
<comment type="function">
    <text>Orphan receptor; could be a chemoattractant receptor.</text>
</comment>
<comment type="subcellular location">
    <subcellularLocation>
        <location>Cell membrane</location>
        <topology>Multi-pass membrane protein</topology>
    </subcellularLocation>
</comment>
<comment type="polymorphism">
    <text evidence="3">In Rattus norvegicus, Gpr33 is disrupted by a 14 bp deletion. GPR33 has undergone independent pseudogenization in human, chimpanzee, orangutan, siamang and rat. This selective inactivation may be due to its interaction with a putative pathogen that could use GPR33 as a receptor for cell invasion.</text>
</comment>
<comment type="similarity">
    <text evidence="2">Belongs to the G-protein coupled receptor 1 family.</text>
</comment>
<dbReference type="EMBL" id="AY494004">
    <property type="protein sequence ID" value="AAR98757.1"/>
    <property type="molecule type" value="Genomic_DNA"/>
</dbReference>
<dbReference type="RefSeq" id="XP_032763458.1">
    <property type="nucleotide sequence ID" value="XM_032907567.1"/>
</dbReference>
<dbReference type="SMR" id="Q49SP8"/>
<dbReference type="GlyCosmos" id="Q49SP8">
    <property type="glycosylation" value="2 sites, No reported glycans"/>
</dbReference>
<dbReference type="GeneID" id="116904935"/>
<dbReference type="GO" id="GO:0005886">
    <property type="term" value="C:plasma membrane"/>
    <property type="evidence" value="ECO:0007669"/>
    <property type="project" value="UniProtKB-SubCell"/>
</dbReference>
<dbReference type="GO" id="GO:0004875">
    <property type="term" value="F:complement receptor activity"/>
    <property type="evidence" value="ECO:0007669"/>
    <property type="project" value="TreeGrafter"/>
</dbReference>
<dbReference type="GO" id="GO:0004930">
    <property type="term" value="F:G protein-coupled receptor activity"/>
    <property type="evidence" value="ECO:0007669"/>
    <property type="project" value="UniProtKB-KW"/>
</dbReference>
<dbReference type="GO" id="GO:0006954">
    <property type="term" value="P:inflammatory response"/>
    <property type="evidence" value="ECO:0007669"/>
    <property type="project" value="TreeGrafter"/>
</dbReference>
<dbReference type="GO" id="GO:0007200">
    <property type="term" value="P:phospholipase C-activating G protein-coupled receptor signaling pathway"/>
    <property type="evidence" value="ECO:0007669"/>
    <property type="project" value="TreeGrafter"/>
</dbReference>
<dbReference type="GO" id="GO:0007204">
    <property type="term" value="P:positive regulation of cytosolic calcium ion concentration"/>
    <property type="evidence" value="ECO:0007669"/>
    <property type="project" value="TreeGrafter"/>
</dbReference>
<dbReference type="CDD" id="cd15120">
    <property type="entry name" value="7tmA_GPR33"/>
    <property type="match status" value="1"/>
</dbReference>
<dbReference type="FunFam" id="1.20.1070.10:FF:000034">
    <property type="entry name" value="G-protein coupled receptor 1"/>
    <property type="match status" value="1"/>
</dbReference>
<dbReference type="Gene3D" id="1.20.1070.10">
    <property type="entry name" value="Rhodopsin 7-helix transmembrane proteins"/>
    <property type="match status" value="1"/>
</dbReference>
<dbReference type="InterPro" id="IPR000826">
    <property type="entry name" value="Formyl_rcpt-rel"/>
</dbReference>
<dbReference type="InterPro" id="IPR000276">
    <property type="entry name" value="GPCR_Rhodpsn"/>
</dbReference>
<dbReference type="InterPro" id="IPR017452">
    <property type="entry name" value="GPCR_Rhodpsn_7TM"/>
</dbReference>
<dbReference type="PANTHER" id="PTHR24225">
    <property type="entry name" value="CHEMOTACTIC RECEPTOR"/>
    <property type="match status" value="1"/>
</dbReference>
<dbReference type="PANTHER" id="PTHR24225:SF5">
    <property type="entry name" value="G-PROTEIN COUPLED RECEPTOR 33-RELATED"/>
    <property type="match status" value="1"/>
</dbReference>
<dbReference type="Pfam" id="PF00001">
    <property type="entry name" value="7tm_1"/>
    <property type="match status" value="1"/>
</dbReference>
<dbReference type="PRINTS" id="PR00526">
    <property type="entry name" value="FMETLEUPHER"/>
</dbReference>
<dbReference type="PRINTS" id="PR00237">
    <property type="entry name" value="GPCRRHODOPSN"/>
</dbReference>
<dbReference type="SUPFAM" id="SSF81321">
    <property type="entry name" value="Family A G protein-coupled receptor-like"/>
    <property type="match status" value="1"/>
</dbReference>
<dbReference type="PROSITE" id="PS50262">
    <property type="entry name" value="G_PROTEIN_RECEP_F1_2"/>
    <property type="match status" value="1"/>
</dbReference>
<accession>Q49SP8</accession>
<evidence type="ECO:0000255" key="1"/>
<evidence type="ECO:0000255" key="2">
    <source>
        <dbReference type="PROSITE-ProRule" id="PRU00521"/>
    </source>
</evidence>
<evidence type="ECO:0000305" key="3">
    <source>
    </source>
</evidence>
<proteinExistence type="inferred from homology"/>
<organism>
    <name type="scientific">Rattus rattus</name>
    <name type="common">Black rat</name>
    <dbReference type="NCBI Taxonomy" id="10117"/>
    <lineage>
        <taxon>Eukaryota</taxon>
        <taxon>Metazoa</taxon>
        <taxon>Chordata</taxon>
        <taxon>Craniata</taxon>
        <taxon>Vertebrata</taxon>
        <taxon>Euteleostomi</taxon>
        <taxon>Mammalia</taxon>
        <taxon>Eutheria</taxon>
        <taxon>Euarchontoglires</taxon>
        <taxon>Glires</taxon>
        <taxon>Rodentia</taxon>
        <taxon>Myomorpha</taxon>
        <taxon>Muroidea</taxon>
        <taxon>Muridae</taxon>
        <taxon>Murinae</taxon>
        <taxon>Rattus</taxon>
    </lineage>
</organism>
<reference key="1">
    <citation type="journal article" date="2005" name="J. Biol. Chem.">
        <title>The rise and fall of the chemoattractant receptor GPR33.</title>
        <authorList>
            <person name="Roempler H."/>
            <person name="Schulz A."/>
            <person name="Pitra C."/>
            <person name="Coop G."/>
            <person name="Przeworski M."/>
            <person name="Paeaebo S."/>
            <person name="Schoeneberg T."/>
        </authorList>
    </citation>
    <scope>NUCLEOTIDE SEQUENCE [GENOMIC DNA]</scope>
</reference>
<sequence>MDRVNSSGHVISVSPSLTNSTGVPTPAPKAIIAAALFMSFIVGTISNGLYLWMLKFKMQRTVNTLLFFHLILSYFISTLILPFMATSFLQDNHWAFGSVLCKVFNSTLSVSMFASVFFLSAISVDRYHLTLHPVWSQQHRTPRWASRIALRIWILATILSIPYLVFRETHDDHKGRIKCQNNYIVGTNWESSEHQTLGQWIHAACFGRRFLLGFLLPFLVIVFCYKRVATKMKDKGLFKSSKPFKVMLTAVVSFFVCWMPYHVHSGLVLTKSQPLPSQLTLGLAVVTISFNTVVSPILYLFTGENFEVFKKSILALFKSTFSDSSATERTQTLNSETEI</sequence>
<protein>
    <recommendedName>
        <fullName>Probable G-protein coupled receptor 33</fullName>
    </recommendedName>
</protein>